<proteinExistence type="inferred from homology"/>
<keyword id="KW-0285">Flavoprotein</keyword>
<keyword id="KW-0288">FMN</keyword>
<keyword id="KW-0560">Oxidoreductase</keyword>
<keyword id="KW-0664">Pyridoxine biosynthesis</keyword>
<accession>Q1J188</accession>
<sequence>MPDPLPDLSSLRLAYTRAELRRADLDPDPLRQFQGWLGEALQAGLREPYALSLATADASGRPSVRTVLLRGADERGLTFYTNYESHKGHDLAQNPQAELLFFWADLERQVRAYGPVERVSEEESTAYFHARPRESQIAAHASDPQSAPIANRGALEAKLAALQAQYPEGTPVPRPDFWGGYRVRVREWEFWQGRPSRLHDRFRYTWEGEGWRIERLMP</sequence>
<organism>
    <name type="scientific">Deinococcus geothermalis (strain DSM 11300 / CIP 105573 / AG-3a)</name>
    <dbReference type="NCBI Taxonomy" id="319795"/>
    <lineage>
        <taxon>Bacteria</taxon>
        <taxon>Thermotogati</taxon>
        <taxon>Deinococcota</taxon>
        <taxon>Deinococci</taxon>
        <taxon>Deinococcales</taxon>
        <taxon>Deinococcaceae</taxon>
        <taxon>Deinococcus</taxon>
    </lineage>
</organism>
<gene>
    <name evidence="1" type="primary">pdxH</name>
    <name type="ordered locus">Dgeo_0443</name>
</gene>
<evidence type="ECO:0000255" key="1">
    <source>
        <dbReference type="HAMAP-Rule" id="MF_01629"/>
    </source>
</evidence>
<feature type="chain" id="PRO_0000255864" description="Pyridoxine/pyridoxamine 5'-phosphate oxidase">
    <location>
        <begin position="1"/>
        <end position="218"/>
    </location>
</feature>
<feature type="binding site" evidence="1">
    <location>
        <begin position="12"/>
        <end position="15"/>
    </location>
    <ligand>
        <name>substrate</name>
    </ligand>
</feature>
<feature type="binding site" evidence="1">
    <location>
        <begin position="65"/>
        <end position="70"/>
    </location>
    <ligand>
        <name>FMN</name>
        <dbReference type="ChEBI" id="CHEBI:58210"/>
    </ligand>
</feature>
<feature type="binding site" evidence="1">
    <location>
        <position position="70"/>
    </location>
    <ligand>
        <name>substrate</name>
    </ligand>
</feature>
<feature type="binding site" evidence="1">
    <location>
        <begin position="80"/>
        <end position="81"/>
    </location>
    <ligand>
        <name>FMN</name>
        <dbReference type="ChEBI" id="CHEBI:58210"/>
    </ligand>
</feature>
<feature type="binding site" evidence="1">
    <location>
        <position position="87"/>
    </location>
    <ligand>
        <name>FMN</name>
        <dbReference type="ChEBI" id="CHEBI:58210"/>
    </ligand>
</feature>
<feature type="binding site" evidence="1">
    <location>
        <position position="109"/>
    </location>
    <ligand>
        <name>FMN</name>
        <dbReference type="ChEBI" id="CHEBI:58210"/>
    </ligand>
</feature>
<feature type="binding site" evidence="1">
    <location>
        <position position="127"/>
    </location>
    <ligand>
        <name>substrate</name>
    </ligand>
</feature>
<feature type="binding site" evidence="1">
    <location>
        <position position="131"/>
    </location>
    <ligand>
        <name>substrate</name>
    </ligand>
</feature>
<feature type="binding site" evidence="1">
    <location>
        <position position="135"/>
    </location>
    <ligand>
        <name>substrate</name>
    </ligand>
</feature>
<feature type="binding site" evidence="1">
    <location>
        <begin position="145"/>
        <end position="146"/>
    </location>
    <ligand>
        <name>FMN</name>
        <dbReference type="ChEBI" id="CHEBI:58210"/>
    </ligand>
</feature>
<feature type="binding site" evidence="1">
    <location>
        <position position="191"/>
    </location>
    <ligand>
        <name>FMN</name>
        <dbReference type="ChEBI" id="CHEBI:58210"/>
    </ligand>
</feature>
<feature type="binding site" evidence="1">
    <location>
        <begin position="197"/>
        <end position="199"/>
    </location>
    <ligand>
        <name>substrate</name>
    </ligand>
</feature>
<feature type="binding site" evidence="1">
    <location>
        <position position="201"/>
    </location>
    <ligand>
        <name>FMN</name>
        <dbReference type="ChEBI" id="CHEBI:58210"/>
    </ligand>
</feature>
<reference key="1">
    <citation type="submission" date="2006-04" db="EMBL/GenBank/DDBJ databases">
        <title>Complete sequence of chromosome of Deinococcus geothermalis DSM 11300.</title>
        <authorList>
            <person name="Copeland A."/>
            <person name="Lucas S."/>
            <person name="Lapidus A."/>
            <person name="Barry K."/>
            <person name="Detter J.C."/>
            <person name="Glavina del Rio T."/>
            <person name="Hammon N."/>
            <person name="Israni S."/>
            <person name="Dalin E."/>
            <person name="Tice H."/>
            <person name="Pitluck S."/>
            <person name="Brettin T."/>
            <person name="Bruce D."/>
            <person name="Han C."/>
            <person name="Tapia R."/>
            <person name="Saunders E."/>
            <person name="Gilna P."/>
            <person name="Schmutz J."/>
            <person name="Larimer F."/>
            <person name="Land M."/>
            <person name="Hauser L."/>
            <person name="Kyrpides N."/>
            <person name="Kim E."/>
            <person name="Daly M.J."/>
            <person name="Fredrickson J.K."/>
            <person name="Makarova K.S."/>
            <person name="Gaidamakova E.K."/>
            <person name="Zhai M."/>
            <person name="Richardson P."/>
        </authorList>
    </citation>
    <scope>NUCLEOTIDE SEQUENCE [LARGE SCALE GENOMIC DNA]</scope>
    <source>
        <strain>DSM 11300 / CIP 105573 / AG-3a</strain>
    </source>
</reference>
<name>PDXH_DEIGD</name>
<dbReference type="EC" id="1.4.3.5" evidence="1"/>
<dbReference type="EMBL" id="CP000359">
    <property type="protein sequence ID" value="ABF44746.1"/>
    <property type="molecule type" value="Genomic_DNA"/>
</dbReference>
<dbReference type="RefSeq" id="WP_011529589.1">
    <property type="nucleotide sequence ID" value="NC_008025.1"/>
</dbReference>
<dbReference type="SMR" id="Q1J188"/>
<dbReference type="STRING" id="319795.Dgeo_0443"/>
<dbReference type="KEGG" id="dge:Dgeo_0443"/>
<dbReference type="eggNOG" id="COG0259">
    <property type="taxonomic scope" value="Bacteria"/>
</dbReference>
<dbReference type="HOGENOM" id="CLU_032263_2_2_0"/>
<dbReference type="UniPathway" id="UPA01068">
    <property type="reaction ID" value="UER00304"/>
</dbReference>
<dbReference type="UniPathway" id="UPA01068">
    <property type="reaction ID" value="UER00305"/>
</dbReference>
<dbReference type="Proteomes" id="UP000002431">
    <property type="component" value="Chromosome"/>
</dbReference>
<dbReference type="GO" id="GO:0010181">
    <property type="term" value="F:FMN binding"/>
    <property type="evidence" value="ECO:0007669"/>
    <property type="project" value="UniProtKB-UniRule"/>
</dbReference>
<dbReference type="GO" id="GO:0004733">
    <property type="term" value="F:pyridoxamine phosphate oxidase activity"/>
    <property type="evidence" value="ECO:0007669"/>
    <property type="project" value="UniProtKB-UniRule"/>
</dbReference>
<dbReference type="GO" id="GO:0008615">
    <property type="term" value="P:pyridoxine biosynthetic process"/>
    <property type="evidence" value="ECO:0007669"/>
    <property type="project" value="UniProtKB-KW"/>
</dbReference>
<dbReference type="Gene3D" id="2.30.110.10">
    <property type="entry name" value="Electron Transport, Fmn-binding Protein, Chain A"/>
    <property type="match status" value="1"/>
</dbReference>
<dbReference type="HAMAP" id="MF_01629">
    <property type="entry name" value="PdxH"/>
    <property type="match status" value="1"/>
</dbReference>
<dbReference type="InterPro" id="IPR000659">
    <property type="entry name" value="Pyridox_Oxase"/>
</dbReference>
<dbReference type="InterPro" id="IPR019740">
    <property type="entry name" value="Pyridox_Oxase_CS"/>
</dbReference>
<dbReference type="InterPro" id="IPR011576">
    <property type="entry name" value="Pyridox_Oxase_N"/>
</dbReference>
<dbReference type="InterPro" id="IPR019576">
    <property type="entry name" value="Pyridoxamine_oxidase_dimer_C"/>
</dbReference>
<dbReference type="InterPro" id="IPR012349">
    <property type="entry name" value="Split_barrel_FMN-bd"/>
</dbReference>
<dbReference type="NCBIfam" id="TIGR00558">
    <property type="entry name" value="pdxH"/>
    <property type="match status" value="1"/>
</dbReference>
<dbReference type="NCBIfam" id="NF004231">
    <property type="entry name" value="PRK05679.1"/>
    <property type="match status" value="1"/>
</dbReference>
<dbReference type="PANTHER" id="PTHR10851:SF0">
    <property type="entry name" value="PYRIDOXINE-5'-PHOSPHATE OXIDASE"/>
    <property type="match status" value="1"/>
</dbReference>
<dbReference type="PANTHER" id="PTHR10851">
    <property type="entry name" value="PYRIDOXINE-5-PHOSPHATE OXIDASE"/>
    <property type="match status" value="1"/>
</dbReference>
<dbReference type="Pfam" id="PF10590">
    <property type="entry name" value="PNP_phzG_C"/>
    <property type="match status" value="1"/>
</dbReference>
<dbReference type="Pfam" id="PF01243">
    <property type="entry name" value="PNPOx_N"/>
    <property type="match status" value="1"/>
</dbReference>
<dbReference type="PIRSF" id="PIRSF000190">
    <property type="entry name" value="Pyd_amn-ph_oxd"/>
    <property type="match status" value="1"/>
</dbReference>
<dbReference type="SUPFAM" id="SSF50475">
    <property type="entry name" value="FMN-binding split barrel"/>
    <property type="match status" value="1"/>
</dbReference>
<dbReference type="PROSITE" id="PS01064">
    <property type="entry name" value="PYRIDOX_OXIDASE"/>
    <property type="match status" value="1"/>
</dbReference>
<protein>
    <recommendedName>
        <fullName evidence="1">Pyridoxine/pyridoxamine 5'-phosphate oxidase</fullName>
        <ecNumber evidence="1">1.4.3.5</ecNumber>
    </recommendedName>
    <alternativeName>
        <fullName evidence="1">PNP/PMP oxidase</fullName>
        <shortName evidence="1">PNPOx</shortName>
    </alternativeName>
    <alternativeName>
        <fullName evidence="1">Pyridoxal 5'-phosphate synthase</fullName>
    </alternativeName>
</protein>
<comment type="function">
    <text evidence="1">Catalyzes the oxidation of either pyridoxine 5'-phosphate (PNP) or pyridoxamine 5'-phosphate (PMP) into pyridoxal 5'-phosphate (PLP).</text>
</comment>
<comment type="catalytic activity">
    <reaction evidence="1">
        <text>pyridoxamine 5'-phosphate + O2 + H2O = pyridoxal 5'-phosphate + H2O2 + NH4(+)</text>
        <dbReference type="Rhea" id="RHEA:15817"/>
        <dbReference type="ChEBI" id="CHEBI:15377"/>
        <dbReference type="ChEBI" id="CHEBI:15379"/>
        <dbReference type="ChEBI" id="CHEBI:16240"/>
        <dbReference type="ChEBI" id="CHEBI:28938"/>
        <dbReference type="ChEBI" id="CHEBI:58451"/>
        <dbReference type="ChEBI" id="CHEBI:597326"/>
        <dbReference type="EC" id="1.4.3.5"/>
    </reaction>
</comment>
<comment type="catalytic activity">
    <reaction evidence="1">
        <text>pyridoxine 5'-phosphate + O2 = pyridoxal 5'-phosphate + H2O2</text>
        <dbReference type="Rhea" id="RHEA:15149"/>
        <dbReference type="ChEBI" id="CHEBI:15379"/>
        <dbReference type="ChEBI" id="CHEBI:16240"/>
        <dbReference type="ChEBI" id="CHEBI:58589"/>
        <dbReference type="ChEBI" id="CHEBI:597326"/>
        <dbReference type="EC" id="1.4.3.5"/>
    </reaction>
</comment>
<comment type="cofactor">
    <cofactor evidence="1">
        <name>FMN</name>
        <dbReference type="ChEBI" id="CHEBI:58210"/>
    </cofactor>
    <text evidence="1">Binds 1 FMN per subunit.</text>
</comment>
<comment type="pathway">
    <text evidence="1">Cofactor metabolism; pyridoxal 5'-phosphate salvage; pyridoxal 5'-phosphate from pyridoxamine 5'-phosphate: step 1/1.</text>
</comment>
<comment type="pathway">
    <text evidence="1">Cofactor metabolism; pyridoxal 5'-phosphate salvage; pyridoxal 5'-phosphate from pyridoxine 5'-phosphate: step 1/1.</text>
</comment>
<comment type="subunit">
    <text evidence="1">Homodimer.</text>
</comment>
<comment type="similarity">
    <text evidence="1">Belongs to the pyridoxamine 5'-phosphate oxidase family.</text>
</comment>